<protein>
    <recommendedName>
        <fullName>Guanine nucleotide exchange factor VAV3</fullName>
        <shortName>VAV-3</shortName>
    </recommendedName>
</protein>
<feature type="chain" id="PRO_0000080987" description="Guanine nucleotide exchange factor VAV3">
    <location>
        <begin position="1"/>
        <end position="847"/>
    </location>
</feature>
<feature type="domain" description="Calponin-homology (CH)" evidence="3">
    <location>
        <begin position="1"/>
        <end position="119"/>
    </location>
</feature>
<feature type="domain" description="DH" evidence="4">
    <location>
        <begin position="192"/>
        <end position="371"/>
    </location>
</feature>
<feature type="domain" description="PH" evidence="5">
    <location>
        <begin position="400"/>
        <end position="502"/>
    </location>
</feature>
<feature type="domain" description="SH3 1" evidence="7">
    <location>
        <begin position="592"/>
        <end position="660"/>
    </location>
</feature>
<feature type="domain" description="SH2" evidence="6">
    <location>
        <begin position="672"/>
        <end position="766"/>
    </location>
</feature>
<feature type="domain" description="SH3 2" evidence="7">
    <location>
        <begin position="788"/>
        <end position="847"/>
    </location>
</feature>
<feature type="zinc finger region" description="Phorbol-ester/DAG-type" evidence="8">
    <location>
        <begin position="513"/>
        <end position="562"/>
    </location>
</feature>
<feature type="region of interest" description="Sufficient for interaction with ROS1" evidence="1">
    <location>
        <begin position="560"/>
        <end position="847"/>
    </location>
</feature>
<feature type="modified residue" description="Phosphotyrosine" evidence="2">
    <location>
        <position position="141"/>
    </location>
</feature>
<feature type="splice variant" id="VSP_042360" description="In isoform 3." evidence="12 13">
    <location>
        <begin position="1"/>
        <end position="560"/>
    </location>
</feature>
<feature type="splice variant" id="VSP_042361" description="In isoform 3." evidence="12 13">
    <original>NCGRVNSV</original>
    <variation>MPIFTFVS</variation>
    <location>
        <begin position="561"/>
        <end position="568"/>
    </location>
</feature>
<feature type="splice variant" id="VSP_042362" description="In isoform 4." evidence="13">
    <original>EQGPFK</original>
    <variation>GKSCLL</variation>
    <location>
        <begin position="569"/>
        <end position="574"/>
    </location>
</feature>
<feature type="splice variant" id="VSP_042363" description="In isoform 4." evidence="13">
    <location>
        <begin position="575"/>
        <end position="847"/>
    </location>
</feature>
<feature type="sequence conflict" description="In Ref. 2; BAC30879." evidence="14" ref="2">
    <original>K</original>
    <variation>R</variation>
    <location>
        <position position="355"/>
    </location>
</feature>
<feature type="sequence conflict" description="In Ref. 2; BAC28212." evidence="14" ref="2">
    <original>I</original>
    <variation>T</variation>
    <location>
        <position position="452"/>
    </location>
</feature>
<dbReference type="EMBL" id="AF067816">
    <property type="protein sequence ID" value="AAF09171.1"/>
    <property type="molecule type" value="mRNA"/>
</dbReference>
<dbReference type="EMBL" id="AF140280">
    <property type="protein sequence ID" value="AAF20330.2"/>
    <property type="molecule type" value="mRNA"/>
</dbReference>
<dbReference type="EMBL" id="AK033253">
    <property type="protein sequence ID" value="BAC28212.1"/>
    <property type="molecule type" value="mRNA"/>
</dbReference>
<dbReference type="EMBL" id="AK041249">
    <property type="protein sequence ID" value="BAC30879.2"/>
    <property type="molecule type" value="mRNA"/>
</dbReference>
<dbReference type="EMBL" id="AK147053">
    <property type="protein sequence ID" value="BAE27637.1"/>
    <property type="molecule type" value="mRNA"/>
</dbReference>
<dbReference type="EMBL" id="AL671857">
    <property type="status" value="NOT_ANNOTATED_CDS"/>
    <property type="molecule type" value="Genomic_DNA"/>
</dbReference>
<dbReference type="EMBL" id="AL671987">
    <property type="status" value="NOT_ANNOTATED_CDS"/>
    <property type="molecule type" value="Genomic_DNA"/>
</dbReference>
<dbReference type="EMBL" id="AL731716">
    <property type="status" value="NOT_ANNOTATED_CDS"/>
    <property type="molecule type" value="Genomic_DNA"/>
</dbReference>
<dbReference type="EMBL" id="CR936838">
    <property type="status" value="NOT_ANNOTATED_CDS"/>
    <property type="molecule type" value="Genomic_DNA"/>
</dbReference>
<dbReference type="EMBL" id="CR936848">
    <property type="status" value="NOT_ANNOTATED_CDS"/>
    <property type="molecule type" value="Genomic_DNA"/>
</dbReference>
<dbReference type="EMBL" id="CR936849">
    <property type="status" value="NOT_ANNOTATED_CDS"/>
    <property type="molecule type" value="Genomic_DNA"/>
</dbReference>
<dbReference type="EMBL" id="CR938729">
    <property type="status" value="NOT_ANNOTATED_CDS"/>
    <property type="molecule type" value="Genomic_DNA"/>
</dbReference>
<dbReference type="EMBL" id="BC027242">
    <property type="protein sequence ID" value="AAH27242.1"/>
    <property type="molecule type" value="mRNA"/>
</dbReference>
<dbReference type="EMBL" id="BC052739">
    <property type="protein sequence ID" value="AAH52739.1"/>
    <property type="molecule type" value="mRNA"/>
</dbReference>
<dbReference type="CCDS" id="CCDS17773.1">
    <molecule id="Q9R0C8-1"/>
</dbReference>
<dbReference type="CCDS" id="CCDS59650.1">
    <molecule id="Q9R0C8-3"/>
</dbReference>
<dbReference type="RefSeq" id="NP_065251.2">
    <molecule id="Q9R0C8-1"/>
    <property type="nucleotide sequence ID" value="NM_020505.2"/>
</dbReference>
<dbReference type="RefSeq" id="NP_666251.1">
    <molecule id="Q9R0C8-3"/>
    <property type="nucleotide sequence ID" value="NM_146139.2"/>
</dbReference>
<dbReference type="SMR" id="Q9R0C8"/>
<dbReference type="BioGRID" id="208227">
    <property type="interactions" value="2"/>
</dbReference>
<dbReference type="FunCoup" id="Q9R0C8">
    <property type="interactions" value="2169"/>
</dbReference>
<dbReference type="STRING" id="10090.ENSMUSP00000036270"/>
<dbReference type="iPTMnet" id="Q9R0C8"/>
<dbReference type="PhosphoSitePlus" id="Q9R0C8"/>
<dbReference type="PaxDb" id="10090-ENSMUSP00000036270"/>
<dbReference type="PeptideAtlas" id="Q9R0C8"/>
<dbReference type="ProteomicsDB" id="298274">
    <molecule id="Q9R0C8-1"/>
</dbReference>
<dbReference type="ProteomicsDB" id="298275">
    <molecule id="Q9R0C8-3"/>
</dbReference>
<dbReference type="ProteomicsDB" id="298276">
    <molecule id="Q9R0C8-4"/>
</dbReference>
<dbReference type="Antibodypedia" id="4549">
    <property type="antibodies" value="343 antibodies from 36 providers"/>
</dbReference>
<dbReference type="DNASU" id="57257"/>
<dbReference type="Ensembl" id="ENSMUST00000046864.14">
    <molecule id="Q9R0C8-1"/>
    <property type="protein sequence ID" value="ENSMUSP00000036270.8"/>
    <property type="gene ID" value="ENSMUSG00000033721.17"/>
</dbReference>
<dbReference type="Ensembl" id="ENSMUST00000106576.3">
    <molecule id="Q9R0C8-3"/>
    <property type="protein sequence ID" value="ENSMUSP00000102186.3"/>
    <property type="gene ID" value="ENSMUSG00000033721.17"/>
</dbReference>
<dbReference type="GeneID" id="57257"/>
<dbReference type="KEGG" id="mmu:57257"/>
<dbReference type="UCSC" id="uc008raf.1">
    <molecule id="Q9R0C8-4"/>
    <property type="organism name" value="mouse"/>
</dbReference>
<dbReference type="UCSC" id="uc008rag.1">
    <molecule id="Q9R0C8-1"/>
    <property type="organism name" value="mouse"/>
</dbReference>
<dbReference type="UCSC" id="uc008rah.1">
    <molecule id="Q9R0C8-3"/>
    <property type="organism name" value="mouse"/>
</dbReference>
<dbReference type="AGR" id="MGI:1888518"/>
<dbReference type="CTD" id="10451"/>
<dbReference type="MGI" id="MGI:1888518">
    <property type="gene designation" value="Vav3"/>
</dbReference>
<dbReference type="VEuPathDB" id="HostDB:ENSMUSG00000033721"/>
<dbReference type="eggNOG" id="KOG2996">
    <property type="taxonomic scope" value="Eukaryota"/>
</dbReference>
<dbReference type="GeneTree" id="ENSGT00940000155252"/>
<dbReference type="HOGENOM" id="CLU_013787_0_0_1"/>
<dbReference type="InParanoid" id="Q9R0C8"/>
<dbReference type="OMA" id="MAISCLD"/>
<dbReference type="OrthoDB" id="5340910at2759"/>
<dbReference type="PhylomeDB" id="Q9R0C8"/>
<dbReference type="TreeFam" id="TF316171"/>
<dbReference type="Reactome" id="R-MMU-114604">
    <property type="pathway name" value="GPVI-mediated activation cascade"/>
</dbReference>
<dbReference type="Reactome" id="R-MMU-193648">
    <property type="pathway name" value="NRAGE signals death through JNK"/>
</dbReference>
<dbReference type="Reactome" id="R-MMU-2029482">
    <property type="pathway name" value="Regulation of actin dynamics for phagocytic cup formation"/>
</dbReference>
<dbReference type="Reactome" id="R-MMU-2424491">
    <property type="pathway name" value="DAP12 signaling"/>
</dbReference>
<dbReference type="Reactome" id="R-MMU-2871796">
    <property type="pathway name" value="FCERI mediated MAPK activation"/>
</dbReference>
<dbReference type="Reactome" id="R-MMU-2871809">
    <property type="pathway name" value="FCERI mediated Ca+2 mobilization"/>
</dbReference>
<dbReference type="Reactome" id="R-MMU-3928665">
    <property type="pathway name" value="EPH-ephrin mediated repulsion of cells"/>
</dbReference>
<dbReference type="Reactome" id="R-MMU-416482">
    <property type="pathway name" value="G alpha (12/13) signalling events"/>
</dbReference>
<dbReference type="Reactome" id="R-MMU-4420097">
    <property type="pathway name" value="VEGFA-VEGFR2 Pathway"/>
</dbReference>
<dbReference type="Reactome" id="R-MMU-5218920">
    <property type="pathway name" value="VEGFR2 mediated vascular permeability"/>
</dbReference>
<dbReference type="Reactome" id="R-MMU-8980692">
    <property type="pathway name" value="RHOA GTPase cycle"/>
</dbReference>
<dbReference type="Reactome" id="R-MMU-9013148">
    <property type="pathway name" value="CDC42 GTPase cycle"/>
</dbReference>
<dbReference type="Reactome" id="R-MMU-9013149">
    <property type="pathway name" value="RAC1 GTPase cycle"/>
</dbReference>
<dbReference type="Reactome" id="R-MMU-9013404">
    <property type="pathway name" value="RAC2 GTPase cycle"/>
</dbReference>
<dbReference type="Reactome" id="R-MMU-9013408">
    <property type="pathway name" value="RHOG GTPase cycle"/>
</dbReference>
<dbReference type="Reactome" id="R-MMU-9748787">
    <property type="pathway name" value="Azathioprine ADME"/>
</dbReference>
<dbReference type="BioGRID-ORCS" id="57257">
    <property type="hits" value="0 hits in 77 CRISPR screens"/>
</dbReference>
<dbReference type="ChiTaRS" id="Vav3">
    <property type="organism name" value="mouse"/>
</dbReference>
<dbReference type="PRO" id="PR:Q9R0C8"/>
<dbReference type="Proteomes" id="UP000000589">
    <property type="component" value="Chromosome 3"/>
</dbReference>
<dbReference type="RNAct" id="Q9R0C8">
    <property type="molecule type" value="protein"/>
</dbReference>
<dbReference type="Bgee" id="ENSMUSG00000033721">
    <property type="expression patterns" value="Expressed in habenula and 254 other cell types or tissues"/>
</dbReference>
<dbReference type="GO" id="GO:0005737">
    <property type="term" value="C:cytoplasm"/>
    <property type="evidence" value="ECO:0000314"/>
    <property type="project" value="MGI"/>
</dbReference>
<dbReference type="GO" id="GO:0001772">
    <property type="term" value="C:immunological synapse"/>
    <property type="evidence" value="ECO:0007669"/>
    <property type="project" value="Ensembl"/>
</dbReference>
<dbReference type="GO" id="GO:0005886">
    <property type="term" value="C:plasma membrane"/>
    <property type="evidence" value="ECO:0000314"/>
    <property type="project" value="MGI"/>
</dbReference>
<dbReference type="GO" id="GO:0005154">
    <property type="term" value="F:epidermal growth factor receptor binding"/>
    <property type="evidence" value="ECO:0000353"/>
    <property type="project" value="MGI"/>
</dbReference>
<dbReference type="GO" id="GO:0005085">
    <property type="term" value="F:guanyl-nucleotide exchange factor activity"/>
    <property type="evidence" value="ECO:0000315"/>
    <property type="project" value="MGI"/>
</dbReference>
<dbReference type="GO" id="GO:0008270">
    <property type="term" value="F:zinc ion binding"/>
    <property type="evidence" value="ECO:0007669"/>
    <property type="project" value="UniProtKB-KW"/>
</dbReference>
<dbReference type="GO" id="GO:0001525">
    <property type="term" value="P:angiogenesis"/>
    <property type="evidence" value="ECO:0007669"/>
    <property type="project" value="UniProtKB-KW"/>
</dbReference>
<dbReference type="GO" id="GO:0050853">
    <property type="term" value="P:B cell receptor signaling pathway"/>
    <property type="evidence" value="ECO:0007669"/>
    <property type="project" value="Ensembl"/>
</dbReference>
<dbReference type="GO" id="GO:0016477">
    <property type="term" value="P:cell migration"/>
    <property type="evidence" value="ECO:0000316"/>
    <property type="project" value="MGI"/>
</dbReference>
<dbReference type="GO" id="GO:0030031">
    <property type="term" value="P:cell projection assembly"/>
    <property type="evidence" value="ECO:0000316"/>
    <property type="project" value="MGI"/>
</dbReference>
<dbReference type="GO" id="GO:0006974">
    <property type="term" value="P:DNA damage response"/>
    <property type="evidence" value="ECO:0007669"/>
    <property type="project" value="Ensembl"/>
</dbReference>
<dbReference type="GO" id="GO:0007229">
    <property type="term" value="P:integrin-mediated signaling pathway"/>
    <property type="evidence" value="ECO:0000316"/>
    <property type="project" value="MGI"/>
</dbReference>
<dbReference type="GO" id="GO:0030032">
    <property type="term" value="P:lamellipodium assembly"/>
    <property type="evidence" value="ECO:0000316"/>
    <property type="project" value="MGI"/>
</dbReference>
<dbReference type="GO" id="GO:0030593">
    <property type="term" value="P:neutrophil chemotaxis"/>
    <property type="evidence" value="ECO:0000316"/>
    <property type="project" value="MGI"/>
</dbReference>
<dbReference type="GO" id="GO:0030890">
    <property type="term" value="P:positive regulation of B cell proliferation"/>
    <property type="evidence" value="ECO:0007669"/>
    <property type="project" value="Ensembl"/>
</dbReference>
<dbReference type="GO" id="GO:0045785">
    <property type="term" value="P:positive regulation of cell adhesion"/>
    <property type="evidence" value="ECO:0000316"/>
    <property type="project" value="MGI"/>
</dbReference>
<dbReference type="GO" id="GO:0051897">
    <property type="term" value="P:positive regulation of phosphatidylinositol 3-kinase/protein kinase B signal transduction"/>
    <property type="evidence" value="ECO:0000316"/>
    <property type="project" value="MGI"/>
</dbReference>
<dbReference type="GO" id="GO:0008361">
    <property type="term" value="P:regulation of cell size"/>
    <property type="evidence" value="ECO:0007669"/>
    <property type="project" value="Ensembl"/>
</dbReference>
<dbReference type="GO" id="GO:0009410">
    <property type="term" value="P:response to xenobiotic stimulus"/>
    <property type="evidence" value="ECO:0007669"/>
    <property type="project" value="Ensembl"/>
</dbReference>
<dbReference type="GO" id="GO:0007264">
    <property type="term" value="P:small GTPase-mediated signal transduction"/>
    <property type="evidence" value="ECO:0000315"/>
    <property type="project" value="MGI"/>
</dbReference>
<dbReference type="GO" id="GO:0006906">
    <property type="term" value="P:vesicle fusion"/>
    <property type="evidence" value="ECO:0000316"/>
    <property type="project" value="MGI"/>
</dbReference>
<dbReference type="CDD" id="cd20869">
    <property type="entry name" value="C1_VAV3"/>
    <property type="match status" value="1"/>
</dbReference>
<dbReference type="CDD" id="cd21264">
    <property type="entry name" value="CH_VAV3"/>
    <property type="match status" value="1"/>
</dbReference>
<dbReference type="CDD" id="cd01223">
    <property type="entry name" value="PH_Vav"/>
    <property type="match status" value="1"/>
</dbReference>
<dbReference type="CDD" id="cd00160">
    <property type="entry name" value="RhoGEF"/>
    <property type="match status" value="1"/>
</dbReference>
<dbReference type="CDD" id="cd10407">
    <property type="entry name" value="SH2_Vav3"/>
    <property type="match status" value="1"/>
</dbReference>
<dbReference type="CDD" id="cd11981">
    <property type="entry name" value="SH3_VAV3_1"/>
    <property type="match status" value="1"/>
</dbReference>
<dbReference type="CDD" id="cd11978">
    <property type="entry name" value="SH3_VAV3_2"/>
    <property type="match status" value="1"/>
</dbReference>
<dbReference type="FunFam" id="1.20.900.10:FF:000009">
    <property type="entry name" value="Vav guanine nucleotide exchange factor 1"/>
    <property type="match status" value="1"/>
</dbReference>
<dbReference type="FunFam" id="3.30.60.20:FF:000015">
    <property type="entry name" value="Vav guanine nucleotide exchange factor 1"/>
    <property type="match status" value="1"/>
</dbReference>
<dbReference type="FunFam" id="1.10.418.10:FF:000019">
    <property type="entry name" value="Vav guanine nucleotide exchange factor 2"/>
    <property type="match status" value="1"/>
</dbReference>
<dbReference type="FunFam" id="2.30.29.30:FF:000050">
    <property type="entry name" value="Vav guanine nucleotide exchange factor 2"/>
    <property type="match status" value="1"/>
</dbReference>
<dbReference type="FunFam" id="3.30.505.10:FF:000024">
    <property type="entry name" value="Vav guanine nucleotide exchange factor 2"/>
    <property type="match status" value="1"/>
</dbReference>
<dbReference type="FunFam" id="2.30.30.40:FF:000039">
    <property type="entry name" value="Vav guanine nucleotide exchange factor 3"/>
    <property type="match status" value="1"/>
</dbReference>
<dbReference type="Gene3D" id="3.30.60.20">
    <property type="match status" value="1"/>
</dbReference>
<dbReference type="Gene3D" id="1.10.418.10">
    <property type="entry name" value="Calponin-like domain"/>
    <property type="match status" value="1"/>
</dbReference>
<dbReference type="Gene3D" id="1.20.900.10">
    <property type="entry name" value="Dbl homology (DH) domain"/>
    <property type="match status" value="1"/>
</dbReference>
<dbReference type="Gene3D" id="2.30.29.30">
    <property type="entry name" value="Pleckstrin-homology domain (PH domain)/Phosphotyrosine-binding domain (PTB)"/>
    <property type="match status" value="1"/>
</dbReference>
<dbReference type="Gene3D" id="3.30.505.10">
    <property type="entry name" value="SH2 domain"/>
    <property type="match status" value="1"/>
</dbReference>
<dbReference type="Gene3D" id="2.30.30.40">
    <property type="entry name" value="SH3 Domains"/>
    <property type="match status" value="2"/>
</dbReference>
<dbReference type="InterPro" id="IPR022613">
    <property type="entry name" value="CAMSAP-like_CH_dom"/>
</dbReference>
<dbReference type="InterPro" id="IPR001715">
    <property type="entry name" value="CH_dom"/>
</dbReference>
<dbReference type="InterPro" id="IPR036872">
    <property type="entry name" value="CH_dom_sf"/>
</dbReference>
<dbReference type="InterPro" id="IPR035899">
    <property type="entry name" value="DBL_dom_sf"/>
</dbReference>
<dbReference type="InterPro" id="IPR000219">
    <property type="entry name" value="DH_dom"/>
</dbReference>
<dbReference type="InterPro" id="IPR001331">
    <property type="entry name" value="GDS_CDC24_CS"/>
</dbReference>
<dbReference type="InterPro" id="IPR002219">
    <property type="entry name" value="PE/DAG-bd"/>
</dbReference>
<dbReference type="InterPro" id="IPR011993">
    <property type="entry name" value="PH-like_dom_sf"/>
</dbReference>
<dbReference type="InterPro" id="IPR001849">
    <property type="entry name" value="PH_domain"/>
</dbReference>
<dbReference type="InterPro" id="IPR037832">
    <property type="entry name" value="PH_Vav"/>
</dbReference>
<dbReference type="InterPro" id="IPR000980">
    <property type="entry name" value="SH2"/>
</dbReference>
<dbReference type="InterPro" id="IPR036860">
    <property type="entry name" value="SH2_dom_sf"/>
</dbReference>
<dbReference type="InterPro" id="IPR036028">
    <property type="entry name" value="SH3-like_dom_sf"/>
</dbReference>
<dbReference type="InterPro" id="IPR001452">
    <property type="entry name" value="SH3_domain"/>
</dbReference>
<dbReference type="InterPro" id="IPR003096">
    <property type="entry name" value="SM22_calponin"/>
</dbReference>
<dbReference type="InterPro" id="IPR055251">
    <property type="entry name" value="SOS1_NGEF_PH"/>
</dbReference>
<dbReference type="InterPro" id="IPR035881">
    <property type="entry name" value="VAV3_SH2"/>
</dbReference>
<dbReference type="InterPro" id="IPR047015">
    <property type="entry name" value="VAV3_SH3_1"/>
</dbReference>
<dbReference type="InterPro" id="IPR035734">
    <property type="entry name" value="VAV3_SH3_2"/>
</dbReference>
<dbReference type="PANTHER" id="PTHR45818:SF1">
    <property type="entry name" value="GUANINE NUCLEOTIDE EXCHANGE FACTOR VAV3"/>
    <property type="match status" value="1"/>
</dbReference>
<dbReference type="PANTHER" id="PTHR45818">
    <property type="entry name" value="PROTEIN VAV"/>
    <property type="match status" value="1"/>
</dbReference>
<dbReference type="Pfam" id="PF00130">
    <property type="entry name" value="C1_1"/>
    <property type="match status" value="1"/>
</dbReference>
<dbReference type="Pfam" id="PF11971">
    <property type="entry name" value="CAMSAP_CH"/>
    <property type="match status" value="1"/>
</dbReference>
<dbReference type="Pfam" id="PF00621">
    <property type="entry name" value="RhoGEF"/>
    <property type="match status" value="1"/>
</dbReference>
<dbReference type="Pfam" id="PF00017">
    <property type="entry name" value="SH2"/>
    <property type="match status" value="1"/>
</dbReference>
<dbReference type="Pfam" id="PF07653">
    <property type="entry name" value="SH3_2"/>
    <property type="match status" value="2"/>
</dbReference>
<dbReference type="Pfam" id="PF22697">
    <property type="entry name" value="SOS1_NGEF_PH"/>
    <property type="match status" value="1"/>
</dbReference>
<dbReference type="PRINTS" id="PR00401">
    <property type="entry name" value="SH2DOMAIN"/>
</dbReference>
<dbReference type="PRINTS" id="PR00452">
    <property type="entry name" value="SH3DOMAIN"/>
</dbReference>
<dbReference type="PRINTS" id="PR00888">
    <property type="entry name" value="SM22CALPONIN"/>
</dbReference>
<dbReference type="SMART" id="SM00109">
    <property type="entry name" value="C1"/>
    <property type="match status" value="1"/>
</dbReference>
<dbReference type="SMART" id="SM00033">
    <property type="entry name" value="CH"/>
    <property type="match status" value="1"/>
</dbReference>
<dbReference type="SMART" id="SM00233">
    <property type="entry name" value="PH"/>
    <property type="match status" value="1"/>
</dbReference>
<dbReference type="SMART" id="SM00325">
    <property type="entry name" value="RhoGEF"/>
    <property type="match status" value="1"/>
</dbReference>
<dbReference type="SMART" id="SM00252">
    <property type="entry name" value="SH2"/>
    <property type="match status" value="1"/>
</dbReference>
<dbReference type="SMART" id="SM00326">
    <property type="entry name" value="SH3"/>
    <property type="match status" value="2"/>
</dbReference>
<dbReference type="SUPFAM" id="SSF47576">
    <property type="entry name" value="Calponin-homology domain, CH-domain"/>
    <property type="match status" value="1"/>
</dbReference>
<dbReference type="SUPFAM" id="SSF48065">
    <property type="entry name" value="DBL homology domain (DH-domain)"/>
    <property type="match status" value="1"/>
</dbReference>
<dbReference type="SUPFAM" id="SSF50729">
    <property type="entry name" value="PH domain-like"/>
    <property type="match status" value="1"/>
</dbReference>
<dbReference type="SUPFAM" id="SSF55550">
    <property type="entry name" value="SH2 domain"/>
    <property type="match status" value="1"/>
</dbReference>
<dbReference type="SUPFAM" id="SSF50044">
    <property type="entry name" value="SH3-domain"/>
    <property type="match status" value="2"/>
</dbReference>
<dbReference type="PROSITE" id="PS50021">
    <property type="entry name" value="CH"/>
    <property type="match status" value="1"/>
</dbReference>
<dbReference type="PROSITE" id="PS00741">
    <property type="entry name" value="DH_1"/>
    <property type="match status" value="1"/>
</dbReference>
<dbReference type="PROSITE" id="PS50010">
    <property type="entry name" value="DH_2"/>
    <property type="match status" value="1"/>
</dbReference>
<dbReference type="PROSITE" id="PS50003">
    <property type="entry name" value="PH_DOMAIN"/>
    <property type="match status" value="1"/>
</dbReference>
<dbReference type="PROSITE" id="PS50001">
    <property type="entry name" value="SH2"/>
    <property type="match status" value="1"/>
</dbReference>
<dbReference type="PROSITE" id="PS50002">
    <property type="entry name" value="SH3"/>
    <property type="match status" value="2"/>
</dbReference>
<dbReference type="PROSITE" id="PS00479">
    <property type="entry name" value="ZF_DAG_PE_1"/>
    <property type="match status" value="1"/>
</dbReference>
<dbReference type="PROSITE" id="PS50081">
    <property type="entry name" value="ZF_DAG_PE_2"/>
    <property type="match status" value="1"/>
</dbReference>
<gene>
    <name type="primary">Vav3</name>
</gene>
<name>VAV3_MOUSE</name>
<reference key="1">
    <citation type="journal article" date="2000" name="Gene">
        <title>Major transcript variants of VAV3, a new member of the VAV family of guanine nucleotide exchange factors.</title>
        <authorList>
            <person name="Trenkle T."/>
            <person name="McClelland M."/>
            <person name="Adlkofer K."/>
            <person name="Welsh J."/>
        </authorList>
    </citation>
    <scope>NUCLEOTIDE SEQUENCE [MRNA] (ISOFORM 1)</scope>
    <scope>NUCLEOTIDE SEQUENCE [MRNA] OF 1-789 (ISOFORM 3)</scope>
    <source>
        <tissue>Skin</tissue>
    </source>
</reference>
<reference key="2">
    <citation type="journal article" date="2005" name="Science">
        <title>The transcriptional landscape of the mammalian genome.</title>
        <authorList>
            <person name="Carninci P."/>
            <person name="Kasukawa T."/>
            <person name="Katayama S."/>
            <person name="Gough J."/>
            <person name="Frith M.C."/>
            <person name="Maeda N."/>
            <person name="Oyama R."/>
            <person name="Ravasi T."/>
            <person name="Lenhard B."/>
            <person name="Wells C."/>
            <person name="Kodzius R."/>
            <person name="Shimokawa K."/>
            <person name="Bajic V.B."/>
            <person name="Brenner S.E."/>
            <person name="Batalov S."/>
            <person name="Forrest A.R."/>
            <person name="Zavolan M."/>
            <person name="Davis M.J."/>
            <person name="Wilming L.G."/>
            <person name="Aidinis V."/>
            <person name="Allen J.E."/>
            <person name="Ambesi-Impiombato A."/>
            <person name="Apweiler R."/>
            <person name="Aturaliya R.N."/>
            <person name="Bailey T.L."/>
            <person name="Bansal M."/>
            <person name="Baxter L."/>
            <person name="Beisel K.W."/>
            <person name="Bersano T."/>
            <person name="Bono H."/>
            <person name="Chalk A.M."/>
            <person name="Chiu K.P."/>
            <person name="Choudhary V."/>
            <person name="Christoffels A."/>
            <person name="Clutterbuck D.R."/>
            <person name="Crowe M.L."/>
            <person name="Dalla E."/>
            <person name="Dalrymple B.P."/>
            <person name="de Bono B."/>
            <person name="Della Gatta G."/>
            <person name="di Bernardo D."/>
            <person name="Down T."/>
            <person name="Engstrom P."/>
            <person name="Fagiolini M."/>
            <person name="Faulkner G."/>
            <person name="Fletcher C.F."/>
            <person name="Fukushima T."/>
            <person name="Furuno M."/>
            <person name="Futaki S."/>
            <person name="Gariboldi M."/>
            <person name="Georgii-Hemming P."/>
            <person name="Gingeras T.R."/>
            <person name="Gojobori T."/>
            <person name="Green R.E."/>
            <person name="Gustincich S."/>
            <person name="Harbers M."/>
            <person name="Hayashi Y."/>
            <person name="Hensch T.K."/>
            <person name="Hirokawa N."/>
            <person name="Hill D."/>
            <person name="Huminiecki L."/>
            <person name="Iacono M."/>
            <person name="Ikeo K."/>
            <person name="Iwama A."/>
            <person name="Ishikawa T."/>
            <person name="Jakt M."/>
            <person name="Kanapin A."/>
            <person name="Katoh M."/>
            <person name="Kawasawa Y."/>
            <person name="Kelso J."/>
            <person name="Kitamura H."/>
            <person name="Kitano H."/>
            <person name="Kollias G."/>
            <person name="Krishnan S.P."/>
            <person name="Kruger A."/>
            <person name="Kummerfeld S.K."/>
            <person name="Kurochkin I.V."/>
            <person name="Lareau L.F."/>
            <person name="Lazarevic D."/>
            <person name="Lipovich L."/>
            <person name="Liu J."/>
            <person name="Liuni S."/>
            <person name="McWilliam S."/>
            <person name="Madan Babu M."/>
            <person name="Madera M."/>
            <person name="Marchionni L."/>
            <person name="Matsuda H."/>
            <person name="Matsuzawa S."/>
            <person name="Miki H."/>
            <person name="Mignone F."/>
            <person name="Miyake S."/>
            <person name="Morris K."/>
            <person name="Mottagui-Tabar S."/>
            <person name="Mulder N."/>
            <person name="Nakano N."/>
            <person name="Nakauchi H."/>
            <person name="Ng P."/>
            <person name="Nilsson R."/>
            <person name="Nishiguchi S."/>
            <person name="Nishikawa S."/>
            <person name="Nori F."/>
            <person name="Ohara O."/>
            <person name="Okazaki Y."/>
            <person name="Orlando V."/>
            <person name="Pang K.C."/>
            <person name="Pavan W.J."/>
            <person name="Pavesi G."/>
            <person name="Pesole G."/>
            <person name="Petrovsky N."/>
            <person name="Piazza S."/>
            <person name="Reed J."/>
            <person name="Reid J.F."/>
            <person name="Ring B.Z."/>
            <person name="Ringwald M."/>
            <person name="Rost B."/>
            <person name="Ruan Y."/>
            <person name="Salzberg S.L."/>
            <person name="Sandelin A."/>
            <person name="Schneider C."/>
            <person name="Schoenbach C."/>
            <person name="Sekiguchi K."/>
            <person name="Semple C.A."/>
            <person name="Seno S."/>
            <person name="Sessa L."/>
            <person name="Sheng Y."/>
            <person name="Shibata Y."/>
            <person name="Shimada H."/>
            <person name="Shimada K."/>
            <person name="Silva D."/>
            <person name="Sinclair B."/>
            <person name="Sperling S."/>
            <person name="Stupka E."/>
            <person name="Sugiura K."/>
            <person name="Sultana R."/>
            <person name="Takenaka Y."/>
            <person name="Taki K."/>
            <person name="Tammoja K."/>
            <person name="Tan S.L."/>
            <person name="Tang S."/>
            <person name="Taylor M.S."/>
            <person name="Tegner J."/>
            <person name="Teichmann S.A."/>
            <person name="Ueda H.R."/>
            <person name="van Nimwegen E."/>
            <person name="Verardo R."/>
            <person name="Wei C.L."/>
            <person name="Yagi K."/>
            <person name="Yamanishi H."/>
            <person name="Zabarovsky E."/>
            <person name="Zhu S."/>
            <person name="Zimmer A."/>
            <person name="Hide W."/>
            <person name="Bult C."/>
            <person name="Grimmond S.M."/>
            <person name="Teasdale R.D."/>
            <person name="Liu E.T."/>
            <person name="Brusic V."/>
            <person name="Quackenbush J."/>
            <person name="Wahlestedt C."/>
            <person name="Mattick J.S."/>
            <person name="Hume D.A."/>
            <person name="Kai C."/>
            <person name="Sasaki D."/>
            <person name="Tomaru Y."/>
            <person name="Fukuda S."/>
            <person name="Kanamori-Katayama M."/>
            <person name="Suzuki M."/>
            <person name="Aoki J."/>
            <person name="Arakawa T."/>
            <person name="Iida J."/>
            <person name="Imamura K."/>
            <person name="Itoh M."/>
            <person name="Kato T."/>
            <person name="Kawaji H."/>
            <person name="Kawagashira N."/>
            <person name="Kawashima T."/>
            <person name="Kojima M."/>
            <person name="Kondo S."/>
            <person name="Konno H."/>
            <person name="Nakano K."/>
            <person name="Ninomiya N."/>
            <person name="Nishio T."/>
            <person name="Okada M."/>
            <person name="Plessy C."/>
            <person name="Shibata K."/>
            <person name="Shiraki T."/>
            <person name="Suzuki S."/>
            <person name="Tagami M."/>
            <person name="Waki K."/>
            <person name="Watahiki A."/>
            <person name="Okamura-Oho Y."/>
            <person name="Suzuki H."/>
            <person name="Kawai J."/>
            <person name="Hayashizaki Y."/>
        </authorList>
    </citation>
    <scope>NUCLEOTIDE SEQUENCE [LARGE SCALE MRNA] (ISOFORMS 3 AND 4)</scope>
    <scope>NUCLEOTIDE SEQUENCE [LARGE SCALE MRNA] OF 1-731 (ISOFORM 1)</scope>
    <source>
        <strain>C57BL/6J</strain>
        <tissue>Embryonic stomach</tissue>
        <tissue>Embryonic testis</tissue>
    </source>
</reference>
<reference key="3">
    <citation type="journal article" date="2009" name="PLoS Biol.">
        <title>Lineage-specific biology revealed by a finished genome assembly of the mouse.</title>
        <authorList>
            <person name="Church D.M."/>
            <person name="Goodstadt L."/>
            <person name="Hillier L.W."/>
            <person name="Zody M.C."/>
            <person name="Goldstein S."/>
            <person name="She X."/>
            <person name="Bult C.J."/>
            <person name="Agarwala R."/>
            <person name="Cherry J.L."/>
            <person name="DiCuccio M."/>
            <person name="Hlavina W."/>
            <person name="Kapustin Y."/>
            <person name="Meric P."/>
            <person name="Maglott D."/>
            <person name="Birtle Z."/>
            <person name="Marques A.C."/>
            <person name="Graves T."/>
            <person name="Zhou S."/>
            <person name="Teague B."/>
            <person name="Potamousis K."/>
            <person name="Churas C."/>
            <person name="Place M."/>
            <person name="Herschleb J."/>
            <person name="Runnheim R."/>
            <person name="Forrest D."/>
            <person name="Amos-Landgraf J."/>
            <person name="Schwartz D.C."/>
            <person name="Cheng Z."/>
            <person name="Lindblad-Toh K."/>
            <person name="Eichler E.E."/>
            <person name="Ponting C.P."/>
        </authorList>
    </citation>
    <scope>NUCLEOTIDE SEQUENCE [LARGE SCALE GENOMIC DNA]</scope>
    <source>
        <strain>C57BL/6J</strain>
    </source>
</reference>
<reference key="4">
    <citation type="journal article" date="2004" name="Genome Res.">
        <title>The status, quality, and expansion of the NIH full-length cDNA project: the Mammalian Gene Collection (MGC).</title>
        <authorList>
            <consortium name="The MGC Project Team"/>
        </authorList>
    </citation>
    <scope>NUCLEOTIDE SEQUENCE [LARGE SCALE MRNA]</scope>
    <source>
        <strain>C57BL/6J</strain>
        <tissue>Brain</tissue>
        <tissue>Mammary tumor</tissue>
    </source>
</reference>
<reference key="5">
    <citation type="submission" date="2009-01" db="UniProtKB">
        <authorList>
            <person name="Lubec G."/>
            <person name="Sunyer B."/>
            <person name="Chen W.-Q."/>
        </authorList>
    </citation>
    <scope>PROTEIN SEQUENCE OF 143-152</scope>
    <scope>IDENTIFICATION BY MASS SPECTROMETRY</scope>
    <source>
        <strain>OF1</strain>
        <tissue>Hippocampus</tissue>
    </source>
</reference>
<reference key="6">
    <citation type="journal article" date="2005" name="Nat. Med.">
        <title>Vav3 regulates osteoclast function and bone mass.</title>
        <authorList>
            <person name="Faccio R."/>
            <person name="Teitelbaum S.L."/>
            <person name="Fujikawa K."/>
            <person name="Chappel J."/>
            <person name="Zallone A."/>
            <person name="Tybulewicz V.L."/>
            <person name="Ross F.P."/>
            <person name="Swat W."/>
        </authorList>
    </citation>
    <scope>FUNCTION</scope>
    <scope>DISRUPTION PHENOTYPE</scope>
</reference>
<reference key="7">
    <citation type="journal article" date="2006" name="Mol. Cell. Biol.">
        <title>Essential role of Vav family guanine nucleotide exchange factors in EphA receptor-mediated angiogenesis.</title>
        <authorList>
            <person name="Hunter S.G."/>
            <person name="Zhuang G."/>
            <person name="Brantley-Sieders D.M."/>
            <person name="Swat W."/>
            <person name="Cowan C.W."/>
            <person name="Chen J."/>
        </authorList>
    </citation>
    <scope>FUNCTION</scope>
    <scope>INTERACTION WITH EPHA2</scope>
</reference>
<reference key="8">
    <citation type="journal article" date="2009" name="Blood">
        <title>Wound healing defect of Vav3-/- mice due to impaired {beta}2-integrin-dependent macrophage phagocytosis of apoptotic neutrophils.</title>
        <authorList>
            <person name="Sindrilaru A."/>
            <person name="Peters T."/>
            <person name="Schymeinsky J."/>
            <person name="Oreshkova T."/>
            <person name="Wang H."/>
            <person name="Gompf A."/>
            <person name="Mannella F."/>
            <person name="Wlaschek M."/>
            <person name="Sunderkotter C."/>
            <person name="Rudolph K.L."/>
            <person name="Walzog B."/>
            <person name="Bustelo X.R."/>
            <person name="Fischer K.D."/>
            <person name="Scharffetter-Kochanek K."/>
        </authorList>
    </citation>
    <scope>FUNCTION</scope>
    <scope>DISRUPTION PHENOTYPE</scope>
</reference>
<reference key="9">
    <citation type="journal article" date="2010" name="Cell">
        <title>A tissue-specific atlas of mouse protein phosphorylation and expression.</title>
        <authorList>
            <person name="Huttlin E.L."/>
            <person name="Jedrychowski M.P."/>
            <person name="Elias J.E."/>
            <person name="Goswami T."/>
            <person name="Rad R."/>
            <person name="Beausoleil S.A."/>
            <person name="Villen J."/>
            <person name="Haas W."/>
            <person name="Sowa M.E."/>
            <person name="Gygi S.P."/>
        </authorList>
    </citation>
    <scope>IDENTIFICATION BY MASS SPECTROMETRY [LARGE SCALE ANALYSIS]</scope>
    <source>
        <tissue>Brain</tissue>
        <tissue>Lung</tissue>
        <tissue>Spleen</tissue>
    </source>
</reference>
<evidence type="ECO:0000250" key="1"/>
<evidence type="ECO:0000250" key="2">
    <source>
        <dbReference type="UniProtKB" id="Q9UKW4"/>
    </source>
</evidence>
<evidence type="ECO:0000255" key="3">
    <source>
        <dbReference type="PROSITE-ProRule" id="PRU00044"/>
    </source>
</evidence>
<evidence type="ECO:0000255" key="4">
    <source>
        <dbReference type="PROSITE-ProRule" id="PRU00062"/>
    </source>
</evidence>
<evidence type="ECO:0000255" key="5">
    <source>
        <dbReference type="PROSITE-ProRule" id="PRU00145"/>
    </source>
</evidence>
<evidence type="ECO:0000255" key="6">
    <source>
        <dbReference type="PROSITE-ProRule" id="PRU00191"/>
    </source>
</evidence>
<evidence type="ECO:0000255" key="7">
    <source>
        <dbReference type="PROSITE-ProRule" id="PRU00192"/>
    </source>
</evidence>
<evidence type="ECO:0000255" key="8">
    <source>
        <dbReference type="PROSITE-ProRule" id="PRU00226"/>
    </source>
</evidence>
<evidence type="ECO:0000269" key="9">
    <source>
    </source>
</evidence>
<evidence type="ECO:0000269" key="10">
    <source>
    </source>
</evidence>
<evidence type="ECO:0000269" key="11">
    <source>
    </source>
</evidence>
<evidence type="ECO:0000303" key="12">
    <source>
    </source>
</evidence>
<evidence type="ECO:0000303" key="13">
    <source>
    </source>
</evidence>
<evidence type="ECO:0000305" key="14"/>
<proteinExistence type="evidence at protein level"/>
<comment type="function">
    <text evidence="1 9 10 11">Exchange factor for GTP-binding proteins RhoA, RhoG and, to a lesser extent, Rac1. Binds physically to the nucleotide-free states of those GTPases (By similarity). Plays an important role in angiogenesis. Its recruitment by phosphorylated EPHA2 is critical for EFNA1-induced RAC1 GTPase activation and vascular endothelial cell migration and assembly. May be important for integrin-mediated signaling, at least in some cell types. In osteoclasts, along with SYK tyrosine kinase, required for signaling through integrin alpha-v/beta-1 (ITAGV-ITGB1), a crucial event for osteoclast proper cytoskeleton organization and function. This signaling pathway involves RAC1, but not RHO, activation. Necessary for proper wound healing. In the course of wound healing, required for the phagocytotic cup formation preceding macrophage phagocytosis of apoptotic neutrophils. Responsible for integrin beta-2-mediated macrophage adhesion and, to a lesser extent, contributes to beta-3-mediated adhesion. Does not affect integrin beta-1-mediated adhesion.</text>
</comment>
<comment type="subunit">
    <text evidence="1 10">Interacts with the PH domain of APS. Interacts with ROS1; constitutive interaction that mediates VAV3 phosphorylation (By similarity). Interacts (via SH2 domains) with the phosphorylated form of EPHA2.</text>
</comment>
<comment type="alternative products">
    <event type="alternative promoter"/>
    <event type="alternative splicing"/>
    <isoform>
        <id>Q9R0C8-1</id>
        <name>1</name>
        <name>Alpha</name>
        <sequence type="displayed"/>
    </isoform>
    <isoform>
        <id>Q9R0C8-2</id>
        <name>2</name>
        <name>Beta</name>
        <sequence type="not described"/>
    </isoform>
    <isoform>
        <id>Q9R0C8-3</id>
        <name>3</name>
        <name>VAV3.1</name>
        <sequence type="described" ref="VSP_042360 VSP_042361"/>
    </isoform>
    <isoform>
        <id>Q9R0C8-4</id>
        <name>4</name>
        <sequence type="described" ref="VSP_042362 VSP_042363"/>
    </isoform>
</comment>
<comment type="tissue specificity">
    <text>Abundantly expressed in osteoclasts and mature osteoblasts. Also expressed in bone marrow macrophages (at protein level):.</text>
</comment>
<comment type="PTM">
    <text evidence="1">Phosphorylated. Phosphorylation can be mediated by ROS1 (By similarity). In osteoclasts, undergoes tyrosine phosphorylation in response to CSF1.</text>
</comment>
<comment type="disruption phenotype">
    <text evidence="9 11">Mutant mice exhibit increased bone density, due to diminished bone resorption, including following parathyroid hormone treatment. This phenotype is due to defective terminal osteoclast differentiation. They also show a delayed wound repair program, characterized by a deficit in macrophage emigration to the wound, a reduced myofibroblast-dependent wound contraction and a diminished neovascularization in the restoration tissue.</text>
</comment>
<comment type="miscellaneous">
    <molecule>Isoform 3</molecule>
    <text evidence="14">Produced by alternative promoter usage.</text>
</comment>
<comment type="miscellaneous">
    <molecule>Isoform 4</molecule>
    <text evidence="14">Produced by alternative splicing.</text>
</comment>
<accession>Q9R0C8</accession>
<accession>A2CFD7</accession>
<accession>Q7TS85</accession>
<accession>Q8BRV2</accession>
<accession>Q8CCF5</accession>
<accession>Q8R076</accession>
<accession>Q9JLS6</accession>
<keyword id="KW-0877">Alternative promoter usage</keyword>
<keyword id="KW-0025">Alternative splicing</keyword>
<keyword id="KW-0037">Angiogenesis</keyword>
<keyword id="KW-0903">Direct protein sequencing</keyword>
<keyword id="KW-0344">Guanine-nucleotide releasing factor</keyword>
<keyword id="KW-0479">Metal-binding</keyword>
<keyword id="KW-0597">Phosphoprotein</keyword>
<keyword id="KW-1185">Reference proteome</keyword>
<keyword id="KW-0677">Repeat</keyword>
<keyword id="KW-0727">SH2 domain</keyword>
<keyword id="KW-0728">SH3 domain</keyword>
<keyword id="KW-0862">Zinc</keyword>
<keyword id="KW-0863">Zinc-finger</keyword>
<organism>
    <name type="scientific">Mus musculus</name>
    <name type="common">Mouse</name>
    <dbReference type="NCBI Taxonomy" id="10090"/>
    <lineage>
        <taxon>Eukaryota</taxon>
        <taxon>Metazoa</taxon>
        <taxon>Chordata</taxon>
        <taxon>Craniata</taxon>
        <taxon>Vertebrata</taxon>
        <taxon>Euteleostomi</taxon>
        <taxon>Mammalia</taxon>
        <taxon>Eutheria</taxon>
        <taxon>Euarchontoglires</taxon>
        <taxon>Glires</taxon>
        <taxon>Rodentia</taxon>
        <taxon>Myomorpha</taxon>
        <taxon>Muroidea</taxon>
        <taxon>Muridae</taxon>
        <taxon>Murinae</taxon>
        <taxon>Mus</taxon>
        <taxon>Mus</taxon>
    </lineage>
</organism>
<sequence>MEPWKQCAQWLIHSKVLPPNHRVTWDSAQVFDLAQTLRDGVLLCQLLNNLRPHSINLKEINLRPQMSQFLCLKNIRTFLAACCDTFGMRKSELFEAFDLFDVRDFGKVIETLSRLSRTPIALATGIRPFPTEESINDEDIYKGLPDLIDETRVEDEEDLYDCVYGEDEGGEVYEDLMKAEEAQQPKSQENDIRSCCLAEIRQTEEKYTETLESIEKYFMAPLKRFLTAAEFDSVFINIPDLVKVHRSLMQEIHDSIVNKDDQNLYQVFINYKERLVIYGQYCSGVESAISNLDYISKTKEDVKLKLEECSKRANNGKFTLRDLLVVPMQRVLKYHLLLQELVKHTHDPMEKANLKLALDAMKDLAQYVNEVKRDNETLREIKQFQLSIENLNQPVLLFGRPQGDGEIRITTLDKHTKQERHIFLFDLAVIVCKRKGDNYEMKEIIDLQQYKIANNPTTDKENKKWSYGFYLIHTQGQNGLEFYCKTKDLKKKWLEQFEMALSNIRPDYADSNFHDFKMHTFTRVTSCRVCQMLLRGTFYQGYLCFKCGAKAHKECLGRVDNCGRVNSVEQGPFKPPEKRTNGLRRASRQVDPGLPKMQVIRNYTGTPAPGLHEGPPLHIQAGDTVELLRGDAHSVFWQGRNLASGEVGFFPSDAVKPSPCVPKPVDYSCQPWYAGPMERLQAETELINRVNSTYLVRHRTKESGEYAISIKYNNEAKHIKILTRDGFFHIAENRKFKSLMELVEYYKHHSLKEGFRTLDTTLQFPYKEPEQPAGQRGNRTGNSLLSPKVLGIAIARYDFCARDMRELSLLKGDMVKIYTKMSANGWWRGEVNGRVGWFPSTYVEEDE</sequence>